<comment type="function">
    <text evidence="1">Acts as a chaperone.</text>
</comment>
<comment type="induction">
    <text evidence="1">By stress conditions e.g. heat shock.</text>
</comment>
<comment type="similarity">
    <text evidence="1">Belongs to the heat shock protein 70 family.</text>
</comment>
<gene>
    <name evidence="1" type="primary">dnaK</name>
    <name type="ordered locus">LGAS_0822</name>
</gene>
<name>DNAK_LACGA</name>
<organism>
    <name type="scientific">Lactobacillus gasseri (strain ATCC 33323 / DSM 20243 / BCRC 14619 / CIP 102991 / JCM 1131 / KCTC 3163 / NCIMB 11718 / NCTC 13722 / AM63)</name>
    <dbReference type="NCBI Taxonomy" id="324831"/>
    <lineage>
        <taxon>Bacteria</taxon>
        <taxon>Bacillati</taxon>
        <taxon>Bacillota</taxon>
        <taxon>Bacilli</taxon>
        <taxon>Lactobacillales</taxon>
        <taxon>Lactobacillaceae</taxon>
        <taxon>Lactobacillus</taxon>
    </lineage>
</organism>
<dbReference type="EMBL" id="CP000413">
    <property type="protein sequence ID" value="ABJ60213.1"/>
    <property type="molecule type" value="Genomic_DNA"/>
</dbReference>
<dbReference type="RefSeq" id="WP_003647472.1">
    <property type="nucleotide sequence ID" value="NZ_WBMG01000005.1"/>
</dbReference>
<dbReference type="SMR" id="Q044A9"/>
<dbReference type="GeneID" id="29638989"/>
<dbReference type="KEGG" id="lga:LGAS_0822"/>
<dbReference type="HOGENOM" id="CLU_005965_2_4_9"/>
<dbReference type="BioCyc" id="LGAS324831:G1G6Y-816-MONOMER"/>
<dbReference type="Proteomes" id="UP000000664">
    <property type="component" value="Chromosome"/>
</dbReference>
<dbReference type="GO" id="GO:0005524">
    <property type="term" value="F:ATP binding"/>
    <property type="evidence" value="ECO:0007669"/>
    <property type="project" value="UniProtKB-UniRule"/>
</dbReference>
<dbReference type="GO" id="GO:0140662">
    <property type="term" value="F:ATP-dependent protein folding chaperone"/>
    <property type="evidence" value="ECO:0007669"/>
    <property type="project" value="InterPro"/>
</dbReference>
<dbReference type="GO" id="GO:0051082">
    <property type="term" value="F:unfolded protein binding"/>
    <property type="evidence" value="ECO:0007669"/>
    <property type="project" value="InterPro"/>
</dbReference>
<dbReference type="CDD" id="cd10234">
    <property type="entry name" value="ASKHA_NBD_HSP70_DnaK-like"/>
    <property type="match status" value="1"/>
</dbReference>
<dbReference type="FunFam" id="2.60.34.10:FF:000014">
    <property type="entry name" value="Chaperone protein DnaK HSP70"/>
    <property type="match status" value="1"/>
</dbReference>
<dbReference type="FunFam" id="1.20.1270.10:FF:000001">
    <property type="entry name" value="Molecular chaperone DnaK"/>
    <property type="match status" value="1"/>
</dbReference>
<dbReference type="FunFam" id="3.30.420.40:FF:000071">
    <property type="entry name" value="Molecular chaperone DnaK"/>
    <property type="match status" value="1"/>
</dbReference>
<dbReference type="FunFam" id="3.90.640.10:FF:000003">
    <property type="entry name" value="Molecular chaperone DnaK"/>
    <property type="match status" value="1"/>
</dbReference>
<dbReference type="Gene3D" id="1.20.1270.10">
    <property type="match status" value="1"/>
</dbReference>
<dbReference type="Gene3D" id="3.30.420.40">
    <property type="match status" value="2"/>
</dbReference>
<dbReference type="Gene3D" id="3.90.640.10">
    <property type="entry name" value="Actin, Chain A, domain 4"/>
    <property type="match status" value="1"/>
</dbReference>
<dbReference type="Gene3D" id="2.60.34.10">
    <property type="entry name" value="Substrate Binding Domain Of DNAk, Chain A, domain 1"/>
    <property type="match status" value="1"/>
</dbReference>
<dbReference type="HAMAP" id="MF_00332">
    <property type="entry name" value="DnaK"/>
    <property type="match status" value="1"/>
</dbReference>
<dbReference type="InterPro" id="IPR043129">
    <property type="entry name" value="ATPase_NBD"/>
</dbReference>
<dbReference type="InterPro" id="IPR012725">
    <property type="entry name" value="Chaperone_DnaK"/>
</dbReference>
<dbReference type="InterPro" id="IPR018181">
    <property type="entry name" value="Heat_shock_70_CS"/>
</dbReference>
<dbReference type="InterPro" id="IPR029048">
    <property type="entry name" value="HSP70_C_sf"/>
</dbReference>
<dbReference type="InterPro" id="IPR029047">
    <property type="entry name" value="HSP70_peptide-bd_sf"/>
</dbReference>
<dbReference type="InterPro" id="IPR013126">
    <property type="entry name" value="Hsp_70_fam"/>
</dbReference>
<dbReference type="NCBIfam" id="NF001413">
    <property type="entry name" value="PRK00290.1"/>
    <property type="match status" value="1"/>
</dbReference>
<dbReference type="NCBIfam" id="TIGR02350">
    <property type="entry name" value="prok_dnaK"/>
    <property type="match status" value="1"/>
</dbReference>
<dbReference type="PANTHER" id="PTHR19375">
    <property type="entry name" value="HEAT SHOCK PROTEIN 70KDA"/>
    <property type="match status" value="1"/>
</dbReference>
<dbReference type="Pfam" id="PF00012">
    <property type="entry name" value="HSP70"/>
    <property type="match status" value="1"/>
</dbReference>
<dbReference type="PRINTS" id="PR00301">
    <property type="entry name" value="HEATSHOCK70"/>
</dbReference>
<dbReference type="SUPFAM" id="SSF53067">
    <property type="entry name" value="Actin-like ATPase domain"/>
    <property type="match status" value="2"/>
</dbReference>
<dbReference type="SUPFAM" id="SSF100934">
    <property type="entry name" value="Heat shock protein 70kD (HSP70), C-terminal subdomain"/>
    <property type="match status" value="1"/>
</dbReference>
<dbReference type="SUPFAM" id="SSF100920">
    <property type="entry name" value="Heat shock protein 70kD (HSP70), peptide-binding domain"/>
    <property type="match status" value="1"/>
</dbReference>
<dbReference type="PROSITE" id="PS00297">
    <property type="entry name" value="HSP70_1"/>
    <property type="match status" value="1"/>
</dbReference>
<dbReference type="PROSITE" id="PS00329">
    <property type="entry name" value="HSP70_2"/>
    <property type="match status" value="1"/>
</dbReference>
<dbReference type="PROSITE" id="PS01036">
    <property type="entry name" value="HSP70_3"/>
    <property type="match status" value="1"/>
</dbReference>
<evidence type="ECO:0000255" key="1">
    <source>
        <dbReference type="HAMAP-Rule" id="MF_00332"/>
    </source>
</evidence>
<evidence type="ECO:0000256" key="2">
    <source>
        <dbReference type="SAM" id="MobiDB-lite"/>
    </source>
</evidence>
<accession>Q044A9</accession>
<protein>
    <recommendedName>
        <fullName evidence="1">Chaperone protein DnaK</fullName>
    </recommendedName>
    <alternativeName>
        <fullName evidence="1">HSP70</fullName>
    </alternativeName>
    <alternativeName>
        <fullName evidence="1">Heat shock 70 kDa protein</fullName>
    </alternativeName>
    <alternativeName>
        <fullName evidence="1">Heat shock protein 70</fullName>
    </alternativeName>
</protein>
<keyword id="KW-0067">ATP-binding</keyword>
<keyword id="KW-0143">Chaperone</keyword>
<keyword id="KW-0547">Nucleotide-binding</keyword>
<keyword id="KW-0597">Phosphoprotein</keyword>
<keyword id="KW-0346">Stress response</keyword>
<reference key="1">
    <citation type="journal article" date="2006" name="Proc. Natl. Acad. Sci. U.S.A.">
        <title>Comparative genomics of the lactic acid bacteria.</title>
        <authorList>
            <person name="Makarova K.S."/>
            <person name="Slesarev A."/>
            <person name="Wolf Y.I."/>
            <person name="Sorokin A."/>
            <person name="Mirkin B."/>
            <person name="Koonin E.V."/>
            <person name="Pavlov A."/>
            <person name="Pavlova N."/>
            <person name="Karamychev V."/>
            <person name="Polouchine N."/>
            <person name="Shakhova V."/>
            <person name="Grigoriev I."/>
            <person name="Lou Y."/>
            <person name="Rohksar D."/>
            <person name="Lucas S."/>
            <person name="Huang K."/>
            <person name="Goodstein D.M."/>
            <person name="Hawkins T."/>
            <person name="Plengvidhya V."/>
            <person name="Welker D."/>
            <person name="Hughes J."/>
            <person name="Goh Y."/>
            <person name="Benson A."/>
            <person name="Baldwin K."/>
            <person name="Lee J.-H."/>
            <person name="Diaz-Muniz I."/>
            <person name="Dosti B."/>
            <person name="Smeianov V."/>
            <person name="Wechter W."/>
            <person name="Barabote R."/>
            <person name="Lorca G."/>
            <person name="Altermann E."/>
            <person name="Barrangou R."/>
            <person name="Ganesan B."/>
            <person name="Xie Y."/>
            <person name="Rawsthorne H."/>
            <person name="Tamir D."/>
            <person name="Parker C."/>
            <person name="Breidt F."/>
            <person name="Broadbent J.R."/>
            <person name="Hutkins R."/>
            <person name="O'Sullivan D."/>
            <person name="Steele J."/>
            <person name="Unlu G."/>
            <person name="Saier M.H. Jr."/>
            <person name="Klaenhammer T."/>
            <person name="Richardson P."/>
            <person name="Kozyavkin S."/>
            <person name="Weimer B.C."/>
            <person name="Mills D.A."/>
        </authorList>
    </citation>
    <scope>NUCLEOTIDE SEQUENCE [LARGE SCALE GENOMIC DNA]</scope>
    <source>
        <strain>ATCC 33323 / DSM 20243 / BCRC 14619 / CIP 102991 / JCM 1131 / KCTC 3163 / NCIMB 11718 / NCTC 13722 / AM63</strain>
    </source>
</reference>
<sequence length="623" mass="66912">MSKVIGIDLGTTNSAVAVLEGKEPKIITNPEGNRTTPSVVAFKNGEIQVGEVAKRQAITNPNTIVSIKSHMGEEGYKVKVGDKEYTPQEISAFILQYIKKFSEDYLGEKVTDAVITVPAYFNDAQRQATKDAGKIAGLNVQRIINEPTASALAYGLDKDENDEKVLVYDLGGGTFDVSILQLGDGVFQVLSTNGDTHLGGDDFDKRIMDWLIQNFKEENGVDLSNDKMALQRLKDAAEKAKKDLSGVSSTNISLPFISAGEAGPLHLEADLTRAKFDELTDDLVQKTKIAFDNALSDAGLSVSDIDKVILNGGSTRIPAVQKAVKEWAGKEPDHSINPDEAVALGAAIQGGVISGDVKDIVLLDVTPLSLGIETMGGVFTKLIDRNTTIPTSKSQIFSTAADNQPAVDVHVLQGERPMAADDKTLGRFELTDIPPAPRGVPQIQVTFDIDKNGIVNVSAKDMGTGKEQKITIKSSSGLSDEEIKKMQKDAEEHAEEDKKRKEEVDLRNEVDQLIFTTEKTLKETKGKVPETETKNVQDALDALKKAQKDNNLDEMKEKKEALSKAAQDLAVKLYQQNGGAQGAAGQAGPQGAQGGQPNNDNGSSNGQGGSTVDGDFHKVDPDK</sequence>
<feature type="chain" id="PRO_1000059588" description="Chaperone protein DnaK">
    <location>
        <begin position="1"/>
        <end position="623"/>
    </location>
</feature>
<feature type="region of interest" description="Disordered" evidence="2">
    <location>
        <begin position="470"/>
        <end position="504"/>
    </location>
</feature>
<feature type="region of interest" description="Disordered" evidence="2">
    <location>
        <begin position="578"/>
        <end position="623"/>
    </location>
</feature>
<feature type="compositionally biased region" description="Basic and acidic residues" evidence="2">
    <location>
        <begin position="481"/>
        <end position="504"/>
    </location>
</feature>
<feature type="compositionally biased region" description="Low complexity" evidence="2">
    <location>
        <begin position="578"/>
        <end position="604"/>
    </location>
</feature>
<feature type="compositionally biased region" description="Basic and acidic residues" evidence="2">
    <location>
        <begin position="614"/>
        <end position="623"/>
    </location>
</feature>
<feature type="modified residue" description="Phosphothreonine; by autocatalysis" evidence="1">
    <location>
        <position position="174"/>
    </location>
</feature>
<proteinExistence type="inferred from homology"/>